<accession>C0PW19</accession>
<keyword id="KW-0687">Ribonucleoprotein</keyword>
<keyword id="KW-0689">Ribosomal protein</keyword>
<name>RS16_SALPC</name>
<protein>
    <recommendedName>
        <fullName evidence="1">Small ribosomal subunit protein bS16</fullName>
    </recommendedName>
    <alternativeName>
        <fullName evidence="2">30S ribosomal protein S16</fullName>
    </alternativeName>
</protein>
<evidence type="ECO:0000255" key="1">
    <source>
        <dbReference type="HAMAP-Rule" id="MF_00385"/>
    </source>
</evidence>
<evidence type="ECO:0000305" key="2"/>
<dbReference type="EMBL" id="CP000857">
    <property type="protein sequence ID" value="ACN46886.1"/>
    <property type="molecule type" value="Genomic_DNA"/>
</dbReference>
<dbReference type="RefSeq" id="WP_000256453.1">
    <property type="nucleotide sequence ID" value="NC_012125.1"/>
</dbReference>
<dbReference type="SMR" id="C0PW19"/>
<dbReference type="KEGG" id="sei:SPC_2787"/>
<dbReference type="HOGENOM" id="CLU_100590_5_1_6"/>
<dbReference type="Proteomes" id="UP000001599">
    <property type="component" value="Chromosome"/>
</dbReference>
<dbReference type="GO" id="GO:0005737">
    <property type="term" value="C:cytoplasm"/>
    <property type="evidence" value="ECO:0007669"/>
    <property type="project" value="UniProtKB-ARBA"/>
</dbReference>
<dbReference type="GO" id="GO:0015935">
    <property type="term" value="C:small ribosomal subunit"/>
    <property type="evidence" value="ECO:0007669"/>
    <property type="project" value="TreeGrafter"/>
</dbReference>
<dbReference type="GO" id="GO:0003735">
    <property type="term" value="F:structural constituent of ribosome"/>
    <property type="evidence" value="ECO:0007669"/>
    <property type="project" value="InterPro"/>
</dbReference>
<dbReference type="GO" id="GO:0006412">
    <property type="term" value="P:translation"/>
    <property type="evidence" value="ECO:0007669"/>
    <property type="project" value="UniProtKB-UniRule"/>
</dbReference>
<dbReference type="FunFam" id="3.30.1320.10:FF:000001">
    <property type="entry name" value="30S ribosomal protein S16"/>
    <property type="match status" value="1"/>
</dbReference>
<dbReference type="Gene3D" id="3.30.1320.10">
    <property type="match status" value="1"/>
</dbReference>
<dbReference type="HAMAP" id="MF_00385">
    <property type="entry name" value="Ribosomal_bS16"/>
    <property type="match status" value="1"/>
</dbReference>
<dbReference type="InterPro" id="IPR000307">
    <property type="entry name" value="Ribosomal_bS16"/>
</dbReference>
<dbReference type="InterPro" id="IPR020592">
    <property type="entry name" value="Ribosomal_bS16_CS"/>
</dbReference>
<dbReference type="InterPro" id="IPR023803">
    <property type="entry name" value="Ribosomal_bS16_dom_sf"/>
</dbReference>
<dbReference type="NCBIfam" id="TIGR00002">
    <property type="entry name" value="S16"/>
    <property type="match status" value="1"/>
</dbReference>
<dbReference type="PANTHER" id="PTHR12919">
    <property type="entry name" value="30S RIBOSOMAL PROTEIN S16"/>
    <property type="match status" value="1"/>
</dbReference>
<dbReference type="PANTHER" id="PTHR12919:SF20">
    <property type="entry name" value="SMALL RIBOSOMAL SUBUNIT PROTEIN BS16M"/>
    <property type="match status" value="1"/>
</dbReference>
<dbReference type="Pfam" id="PF00886">
    <property type="entry name" value="Ribosomal_S16"/>
    <property type="match status" value="1"/>
</dbReference>
<dbReference type="SUPFAM" id="SSF54565">
    <property type="entry name" value="Ribosomal protein S16"/>
    <property type="match status" value="1"/>
</dbReference>
<dbReference type="PROSITE" id="PS00732">
    <property type="entry name" value="RIBOSOMAL_S16"/>
    <property type="match status" value="1"/>
</dbReference>
<proteinExistence type="inferred from homology"/>
<comment type="similarity">
    <text evidence="1">Belongs to the bacterial ribosomal protein bS16 family.</text>
</comment>
<organism>
    <name type="scientific">Salmonella paratyphi C (strain RKS4594)</name>
    <dbReference type="NCBI Taxonomy" id="476213"/>
    <lineage>
        <taxon>Bacteria</taxon>
        <taxon>Pseudomonadati</taxon>
        <taxon>Pseudomonadota</taxon>
        <taxon>Gammaproteobacteria</taxon>
        <taxon>Enterobacterales</taxon>
        <taxon>Enterobacteriaceae</taxon>
        <taxon>Salmonella</taxon>
    </lineage>
</organism>
<reference key="1">
    <citation type="journal article" date="2009" name="PLoS ONE">
        <title>Salmonella paratyphi C: genetic divergence from Salmonella choleraesuis and pathogenic convergence with Salmonella typhi.</title>
        <authorList>
            <person name="Liu W.-Q."/>
            <person name="Feng Y."/>
            <person name="Wang Y."/>
            <person name="Zou Q.-H."/>
            <person name="Chen F."/>
            <person name="Guo J.-T."/>
            <person name="Peng Y.-H."/>
            <person name="Jin Y."/>
            <person name="Li Y.-G."/>
            <person name="Hu S.-N."/>
            <person name="Johnston R.N."/>
            <person name="Liu G.-R."/>
            <person name="Liu S.-L."/>
        </authorList>
    </citation>
    <scope>NUCLEOTIDE SEQUENCE [LARGE SCALE GENOMIC DNA]</scope>
    <source>
        <strain>RKS4594</strain>
    </source>
</reference>
<sequence>MVTIRLARHGAKKRPFYQVVVTDSRNARNGRFIERVGFFNPIASEKEEGTRLDLDRIAHWVGQGATISDRVAALIKEVKKAA</sequence>
<gene>
    <name evidence="1" type="primary">rpsP</name>
    <name type="ordered locus">SPC_2787</name>
</gene>
<feature type="chain" id="PRO_1000134321" description="Small ribosomal subunit protein bS16">
    <location>
        <begin position="1"/>
        <end position="82"/>
    </location>
</feature>